<proteinExistence type="inferred from homology"/>
<feature type="chain" id="PRO_0000112632" description="Acetylglutamate kinase">
    <location>
        <begin position="1"/>
        <end position="263"/>
    </location>
</feature>
<feature type="binding site" evidence="1">
    <location>
        <begin position="49"/>
        <end position="50"/>
    </location>
    <ligand>
        <name>substrate</name>
    </ligand>
</feature>
<feature type="binding site" evidence="1">
    <location>
        <position position="71"/>
    </location>
    <ligand>
        <name>substrate</name>
    </ligand>
</feature>
<feature type="binding site" evidence="1">
    <location>
        <position position="163"/>
    </location>
    <ligand>
        <name>substrate</name>
    </ligand>
</feature>
<feature type="site" description="Transition state stabilizer" evidence="1">
    <location>
        <position position="14"/>
    </location>
</feature>
<feature type="site" description="Transition state stabilizer" evidence="1">
    <location>
        <position position="222"/>
    </location>
</feature>
<dbReference type="EC" id="2.7.2.8" evidence="1"/>
<dbReference type="EMBL" id="AJ252021">
    <property type="protein sequence ID" value="CAB95021.1"/>
    <property type="molecule type" value="Genomic_DNA"/>
</dbReference>
<dbReference type="SMR" id="Q9K4Z0"/>
<dbReference type="UniPathway" id="UPA00068">
    <property type="reaction ID" value="UER00107"/>
</dbReference>
<dbReference type="GO" id="GO:0005737">
    <property type="term" value="C:cytoplasm"/>
    <property type="evidence" value="ECO:0007669"/>
    <property type="project" value="UniProtKB-SubCell"/>
</dbReference>
<dbReference type="GO" id="GO:0003991">
    <property type="term" value="F:acetylglutamate kinase activity"/>
    <property type="evidence" value="ECO:0007669"/>
    <property type="project" value="UniProtKB-UniRule"/>
</dbReference>
<dbReference type="GO" id="GO:0005524">
    <property type="term" value="F:ATP binding"/>
    <property type="evidence" value="ECO:0007669"/>
    <property type="project" value="UniProtKB-UniRule"/>
</dbReference>
<dbReference type="GO" id="GO:0042450">
    <property type="term" value="P:arginine biosynthetic process via ornithine"/>
    <property type="evidence" value="ECO:0007669"/>
    <property type="project" value="UniProtKB-UniRule"/>
</dbReference>
<dbReference type="GO" id="GO:0006526">
    <property type="term" value="P:L-arginine biosynthetic process"/>
    <property type="evidence" value="ECO:0007669"/>
    <property type="project" value="UniProtKB-UniPathway"/>
</dbReference>
<dbReference type="Gene3D" id="3.40.1160.10">
    <property type="entry name" value="Acetylglutamate kinase-like"/>
    <property type="match status" value="1"/>
</dbReference>
<dbReference type="HAMAP" id="MF_00082">
    <property type="entry name" value="ArgB"/>
    <property type="match status" value="1"/>
</dbReference>
<dbReference type="InterPro" id="IPR036393">
    <property type="entry name" value="AceGlu_kinase-like_sf"/>
</dbReference>
<dbReference type="InterPro" id="IPR004662">
    <property type="entry name" value="AcgluKinase_fam"/>
</dbReference>
<dbReference type="InterPro" id="IPR037528">
    <property type="entry name" value="ArgB"/>
</dbReference>
<dbReference type="InterPro" id="IPR001048">
    <property type="entry name" value="Asp/Glu/Uridylate_kinase"/>
</dbReference>
<dbReference type="NCBIfam" id="TIGR00761">
    <property type="entry name" value="argB"/>
    <property type="match status" value="1"/>
</dbReference>
<dbReference type="PANTHER" id="PTHR23342">
    <property type="entry name" value="N-ACETYLGLUTAMATE SYNTHASE"/>
    <property type="match status" value="1"/>
</dbReference>
<dbReference type="PANTHER" id="PTHR23342:SF0">
    <property type="entry name" value="N-ACETYLGLUTAMATE SYNTHASE, MITOCHONDRIAL"/>
    <property type="match status" value="1"/>
</dbReference>
<dbReference type="Pfam" id="PF00696">
    <property type="entry name" value="AA_kinase"/>
    <property type="match status" value="1"/>
</dbReference>
<dbReference type="PIRSF" id="PIRSF000728">
    <property type="entry name" value="NAGK"/>
    <property type="match status" value="1"/>
</dbReference>
<dbReference type="PRINTS" id="PR01469">
    <property type="entry name" value="CARBMTKINASE"/>
</dbReference>
<dbReference type="SUPFAM" id="SSF53633">
    <property type="entry name" value="Carbamate kinase-like"/>
    <property type="match status" value="1"/>
</dbReference>
<accession>Q9K4Z0</accession>
<reference key="1">
    <citation type="journal article" date="2000" name="J. Bacteriol.">
        <title>Evolution of arginine biosynthesis in the bacterial domain: novel gene-enzyme relationships from psychrophilic Moritella strains (Vibrionaceae) and evolutionary significance of N-alpha-acetyl ornithinase.</title>
        <authorList>
            <person name="Xu Y."/>
            <person name="Liang Z."/>
            <person name="Legrain C."/>
            <person name="Ruger H.J."/>
            <person name="Glansdorff N."/>
        </authorList>
    </citation>
    <scope>NUCLEOTIDE SEQUENCE [GENOMIC DNA]</scope>
    <source>
        <strain>JCM 11436 / CIP 108121 / LMG 21258 / 2693</strain>
    </source>
</reference>
<gene>
    <name evidence="1" type="primary">argB</name>
</gene>
<name>ARGB_MORAB</name>
<organism>
    <name type="scientific">Moritella abyssi</name>
    <dbReference type="NCBI Taxonomy" id="111292"/>
    <lineage>
        <taxon>Bacteria</taxon>
        <taxon>Pseudomonadati</taxon>
        <taxon>Pseudomonadota</taxon>
        <taxon>Gammaproteobacteria</taxon>
        <taxon>Alteromonadales</taxon>
        <taxon>Moritellaceae</taxon>
        <taxon>Moritella</taxon>
    </lineage>
</organism>
<protein>
    <recommendedName>
        <fullName evidence="1">Acetylglutamate kinase</fullName>
        <ecNumber evidence="1">2.7.2.8</ecNumber>
    </recommendedName>
    <alternativeName>
        <fullName evidence="1">N-acetyl-L-glutamate 5-phosphotransferase</fullName>
    </alternativeName>
    <alternativeName>
        <fullName evidence="1">NAG kinase</fullName>
        <shortName evidence="1">NAGK</shortName>
    </alternativeName>
</protein>
<evidence type="ECO:0000255" key="1">
    <source>
        <dbReference type="HAMAP-Rule" id="MF_00082"/>
    </source>
</evidence>
<comment type="function">
    <text evidence="1">Catalyzes the ATP-dependent phosphorylation of N-acetyl-L-glutamate.</text>
</comment>
<comment type="catalytic activity">
    <reaction evidence="1">
        <text>N-acetyl-L-glutamate + ATP = N-acetyl-L-glutamyl 5-phosphate + ADP</text>
        <dbReference type="Rhea" id="RHEA:14629"/>
        <dbReference type="ChEBI" id="CHEBI:30616"/>
        <dbReference type="ChEBI" id="CHEBI:44337"/>
        <dbReference type="ChEBI" id="CHEBI:57936"/>
        <dbReference type="ChEBI" id="CHEBI:456216"/>
        <dbReference type="EC" id="2.7.2.8"/>
    </reaction>
</comment>
<comment type="pathway">
    <text evidence="1">Amino-acid biosynthesis; L-arginine biosynthesis; N(2)-acetyl-L-ornithine from L-glutamate: step 2/4.</text>
</comment>
<comment type="subcellular location">
    <subcellularLocation>
        <location evidence="1">Cytoplasm</location>
    </subcellularLocation>
</comment>
<comment type="similarity">
    <text evidence="1">Belongs to the acetylglutamate kinase family. ArgB subfamily.</text>
</comment>
<sequence length="263" mass="27124">MTMKATMTTPLVLKLGGALLQNETALEQLFTALSEYKSTCTSLILVHGGGCFVDDLLAKMNIESEKKNGLRITPASDIGYITGAYVGTANKVLMAQGIKLGFNVVGLTLADGGISTVTLSTAGLGAVGECEAGDPTLLTALLSGGFLPIISSIGIDAQGLLLNVNADQAATAICETLDADLVMLSDVAGILDADMQLIAEMNSHYADELIMAGVIHGGMEVKVKAALKAAASLNRDIKLASWKVPERLVALLNGEAEGSKVSS</sequence>
<keyword id="KW-0028">Amino-acid biosynthesis</keyword>
<keyword id="KW-0055">Arginine biosynthesis</keyword>
<keyword id="KW-0067">ATP-binding</keyword>
<keyword id="KW-0963">Cytoplasm</keyword>
<keyword id="KW-0418">Kinase</keyword>
<keyword id="KW-0547">Nucleotide-binding</keyword>
<keyword id="KW-0808">Transferase</keyword>